<keyword id="KW-0597">Phosphoprotein</keyword>
<keyword id="KW-1185">Reference proteome</keyword>
<evidence type="ECO:0000250" key="1">
    <source>
        <dbReference type="UniProtKB" id="Q8BGI4"/>
    </source>
</evidence>
<evidence type="ECO:0000256" key="2">
    <source>
        <dbReference type="SAM" id="MobiDB-lite"/>
    </source>
</evidence>
<evidence type="ECO:0000269" key="3">
    <source>
    </source>
</evidence>
<evidence type="ECO:0000305" key="4"/>
<protein>
    <recommendedName>
        <fullName>Protein FAM13A</fullName>
    </recommendedName>
    <alternativeName>
        <fullName>Protein Precm1</fullName>
    </alternativeName>
</protein>
<name>FA13A_BOVIN</name>
<proteinExistence type="evidence at transcript level"/>
<sequence length="697" mass="80099">MACEIMPLQSSQEDERPMSPFYLSSAHVSQVSSVSSTGELLERTIRSAVEQHLFDVNSSGGQSSEDSESGASSSSSTSTKQRRRQAKEQDESRHSRDVGRLNKENIPSGFSNLDECMLNACEVEKLYENTSGYIGERGKPKRQKSSSRLSELNENQDGLVNMENLNPTPSHERTGSDHVELISDGSKENEKDGRQSQHLENPTMKIQEHPSLPDSKLQRTPDADDQQESFVSEVPELDLTALCDQKSWEEPIPAFSSWQQESVDADEARLSPQAGRLIRQLLEEDSDPMLSPRFYAYGQSRQYLDDTEMPPSPPNSHPFMRRRSSSLGSYEDEQEDLTPAQLTRRIQSLKKKIRKFEDRFEEERKYRPSHSDKAANPEVLKWTNDLAKFRKQLKESKLKISEEDLPPRMRQRSNTLPKSFGSQLEKEDEKKQELVDKAIKPSVEATLESIQRKLQEKRAETSRPEDIKDMTKDQIANEKVALQKALLYYESIHGRPVSKNERQVMKPLYDRYRLVKQILSRASTIPIIGSPSSKRRSPLLQPIIEGETASFFKEIKEEEEGSEDDNYTKPDFMVTLKTDFSARCFLDQFEDDADGFISPMDDKIPSKCSQDTGLSNLHAASIPELLEHLQEMREEKKRIRKKLRDFEDNFFRQNGRNVQKEDRTPMAEEYNEYKHIKAKLRLLEVLISKRDTDSKSM</sequence>
<comment type="similarity">
    <text evidence="4">Belongs to the FAM13 family.</text>
</comment>
<dbReference type="EMBL" id="AJ510137">
    <property type="protein sequence ID" value="CAD52866.1"/>
    <property type="molecule type" value="mRNA"/>
</dbReference>
<dbReference type="EMBL" id="AJ510139">
    <property type="protein sequence ID" value="CAD52864.1"/>
    <property type="molecule type" value="Genomic_DNA"/>
</dbReference>
<dbReference type="RefSeq" id="NP_777117.1">
    <property type="nucleotide sequence ID" value="NM_174692.2"/>
</dbReference>
<dbReference type="SMR" id="Q8HYW0"/>
<dbReference type="FunCoup" id="Q8HYW0">
    <property type="interactions" value="12"/>
</dbReference>
<dbReference type="STRING" id="9913.ENSBTAP00000067690"/>
<dbReference type="PaxDb" id="9913-ENSBTAP00000014855"/>
<dbReference type="GeneID" id="282605"/>
<dbReference type="KEGG" id="bta:282605"/>
<dbReference type="CTD" id="10144"/>
<dbReference type="eggNOG" id="ENOG502RE4D">
    <property type="taxonomic scope" value="Eukaryota"/>
</dbReference>
<dbReference type="HOGENOM" id="CLU_012606_1_0_1"/>
<dbReference type="InParanoid" id="Q8HYW0"/>
<dbReference type="OrthoDB" id="185175at2759"/>
<dbReference type="TreeFam" id="TF328895"/>
<dbReference type="Proteomes" id="UP000009136">
    <property type="component" value="Unplaced"/>
</dbReference>
<dbReference type="InterPro" id="IPR039102">
    <property type="entry name" value="FAM13"/>
</dbReference>
<dbReference type="PANTHER" id="PTHR15904">
    <property type="entry name" value="FAM13"/>
    <property type="match status" value="1"/>
</dbReference>
<dbReference type="PANTHER" id="PTHR15904:SF18">
    <property type="entry name" value="PROTEIN FAM13A"/>
    <property type="match status" value="1"/>
</dbReference>
<organism>
    <name type="scientific">Bos taurus</name>
    <name type="common">Bovine</name>
    <dbReference type="NCBI Taxonomy" id="9913"/>
    <lineage>
        <taxon>Eukaryota</taxon>
        <taxon>Metazoa</taxon>
        <taxon>Chordata</taxon>
        <taxon>Craniata</taxon>
        <taxon>Vertebrata</taxon>
        <taxon>Euteleostomi</taxon>
        <taxon>Mammalia</taxon>
        <taxon>Eutheria</taxon>
        <taxon>Laurasiatheria</taxon>
        <taxon>Artiodactyla</taxon>
        <taxon>Ruminantia</taxon>
        <taxon>Pecora</taxon>
        <taxon>Bovidae</taxon>
        <taxon>Bovinae</taxon>
        <taxon>Bos</taxon>
    </lineage>
</organism>
<accession>Q8HYW0</accession>
<accession>Q8HYV9</accession>
<gene>
    <name type="primary">FAM13A</name>
    <name type="synonym">FAM13A1</name>
    <name type="synonym">PRECM1</name>
</gene>
<reference key="1">
    <citation type="journal article" date="2004" name="Genomics">
        <title>Cloning and characterization of FAM13A1--a gene near a milk protein QTL on BTA6: evidence for population-wide linkage disequilibrium in Israeli Holsteins.</title>
        <authorList>
            <person name="Cohen M."/>
            <person name="Reichenstein M."/>
            <person name="Everts-van der Wind A."/>
            <person name="Heon-Lee J."/>
            <person name="Shani M."/>
            <person name="Lewin H.A."/>
            <person name="Weller J.I."/>
            <person name="Ron M."/>
            <person name="Seroussi E."/>
        </authorList>
    </citation>
    <scope>NUCLEOTIDE SEQUENCE [GENOMIC DNA / MRNA]</scope>
    <scope>VARIANT ILE-405</scope>
    <source>
        <strain>Holstein</strain>
    </source>
</reference>
<feature type="chain" id="PRO_0000058919" description="Protein FAM13A">
    <location>
        <begin position="1"/>
        <end position="697"/>
    </location>
</feature>
<feature type="region of interest" description="Disordered" evidence="2">
    <location>
        <begin position="1"/>
        <end position="21"/>
    </location>
</feature>
<feature type="region of interest" description="Disordered" evidence="2">
    <location>
        <begin position="52"/>
        <end position="112"/>
    </location>
</feature>
<feature type="region of interest" description="Disordered" evidence="2">
    <location>
        <begin position="133"/>
        <end position="229"/>
    </location>
</feature>
<feature type="region of interest" description="Disordered" evidence="2">
    <location>
        <begin position="307"/>
        <end position="338"/>
    </location>
</feature>
<feature type="region of interest" description="Disordered" evidence="2">
    <location>
        <begin position="398"/>
        <end position="433"/>
    </location>
</feature>
<feature type="compositionally biased region" description="Low complexity" evidence="2">
    <location>
        <begin position="58"/>
        <end position="78"/>
    </location>
</feature>
<feature type="compositionally biased region" description="Basic and acidic residues" evidence="2">
    <location>
        <begin position="86"/>
        <end position="103"/>
    </location>
</feature>
<feature type="compositionally biased region" description="Polar residues" evidence="2">
    <location>
        <begin position="146"/>
        <end position="169"/>
    </location>
</feature>
<feature type="compositionally biased region" description="Basic and acidic residues" evidence="2">
    <location>
        <begin position="170"/>
        <end position="197"/>
    </location>
</feature>
<feature type="compositionally biased region" description="Basic and acidic residues" evidence="2">
    <location>
        <begin position="398"/>
        <end position="407"/>
    </location>
</feature>
<feature type="compositionally biased region" description="Polar residues" evidence="2">
    <location>
        <begin position="412"/>
        <end position="422"/>
    </location>
</feature>
<feature type="compositionally biased region" description="Basic and acidic residues" evidence="2">
    <location>
        <begin position="424"/>
        <end position="433"/>
    </location>
</feature>
<feature type="modified residue" description="Phosphoserine" evidence="1">
    <location>
        <position position="19"/>
    </location>
</feature>
<feature type="modified residue" description="Phosphoserine" evidence="1">
    <location>
        <position position="271"/>
    </location>
</feature>
<feature type="modified residue" description="Phosphoserine" evidence="1">
    <location>
        <position position="291"/>
    </location>
</feature>
<feature type="modified residue" description="Phosphoserine" evidence="1">
    <location>
        <position position="401"/>
    </location>
</feature>
<feature type="sequence variant" evidence="3">
    <original>L</original>
    <variation>I</variation>
    <location>
        <position position="405"/>
    </location>
</feature>
<feature type="sequence conflict" description="In Ref. 1; CAD52864." evidence="4" ref="1">
    <original>M</original>
    <variation>V</variation>
    <location>
        <position position="309"/>
    </location>
</feature>